<gene>
    <name evidence="1" type="primary">pdxB</name>
    <name type="ordered locus">Sden_1483</name>
</gene>
<proteinExistence type="inferred from homology"/>
<protein>
    <recommendedName>
        <fullName evidence="1">Erythronate-4-phosphate dehydrogenase</fullName>
        <ecNumber evidence="1">1.1.1.290</ecNumber>
    </recommendedName>
</protein>
<dbReference type="EC" id="1.1.1.290" evidence="1"/>
<dbReference type="EMBL" id="CP000302">
    <property type="protein sequence ID" value="ABE54768.1"/>
    <property type="molecule type" value="Genomic_DNA"/>
</dbReference>
<dbReference type="RefSeq" id="WP_011495926.1">
    <property type="nucleotide sequence ID" value="NC_007954.1"/>
</dbReference>
<dbReference type="SMR" id="Q12P58"/>
<dbReference type="STRING" id="318161.Sden_1483"/>
<dbReference type="KEGG" id="sdn:Sden_1483"/>
<dbReference type="eggNOG" id="COG0111">
    <property type="taxonomic scope" value="Bacteria"/>
</dbReference>
<dbReference type="HOGENOM" id="CLU_019796_4_0_6"/>
<dbReference type="OrthoDB" id="9770208at2"/>
<dbReference type="UniPathway" id="UPA00244">
    <property type="reaction ID" value="UER00310"/>
</dbReference>
<dbReference type="Proteomes" id="UP000001982">
    <property type="component" value="Chromosome"/>
</dbReference>
<dbReference type="GO" id="GO:0005737">
    <property type="term" value="C:cytoplasm"/>
    <property type="evidence" value="ECO:0007669"/>
    <property type="project" value="UniProtKB-SubCell"/>
</dbReference>
<dbReference type="GO" id="GO:0033711">
    <property type="term" value="F:4-phosphoerythronate dehydrogenase activity"/>
    <property type="evidence" value="ECO:0007669"/>
    <property type="project" value="UniProtKB-EC"/>
</dbReference>
<dbReference type="GO" id="GO:0051287">
    <property type="term" value="F:NAD binding"/>
    <property type="evidence" value="ECO:0007669"/>
    <property type="project" value="InterPro"/>
</dbReference>
<dbReference type="GO" id="GO:0046983">
    <property type="term" value="F:protein dimerization activity"/>
    <property type="evidence" value="ECO:0007669"/>
    <property type="project" value="InterPro"/>
</dbReference>
<dbReference type="GO" id="GO:0008615">
    <property type="term" value="P:pyridoxine biosynthetic process"/>
    <property type="evidence" value="ECO:0007669"/>
    <property type="project" value="UniProtKB-UniRule"/>
</dbReference>
<dbReference type="CDD" id="cd12158">
    <property type="entry name" value="ErythrP_dh"/>
    <property type="match status" value="1"/>
</dbReference>
<dbReference type="Gene3D" id="3.30.1370.170">
    <property type="match status" value="1"/>
</dbReference>
<dbReference type="Gene3D" id="3.40.50.720">
    <property type="entry name" value="NAD(P)-binding Rossmann-like Domain"/>
    <property type="match status" value="2"/>
</dbReference>
<dbReference type="HAMAP" id="MF_01825">
    <property type="entry name" value="PdxB"/>
    <property type="match status" value="1"/>
</dbReference>
<dbReference type="InterPro" id="IPR050418">
    <property type="entry name" value="D-iso_2-hydroxyacid_DH_PdxB"/>
</dbReference>
<dbReference type="InterPro" id="IPR006139">
    <property type="entry name" value="D-isomer_2_OHA_DH_cat_dom"/>
</dbReference>
<dbReference type="InterPro" id="IPR006140">
    <property type="entry name" value="D-isomer_DH_NAD-bd"/>
</dbReference>
<dbReference type="InterPro" id="IPR020921">
    <property type="entry name" value="Erythronate-4-P_DHase"/>
</dbReference>
<dbReference type="InterPro" id="IPR024531">
    <property type="entry name" value="Erythronate-4-P_DHase_dimer"/>
</dbReference>
<dbReference type="InterPro" id="IPR036291">
    <property type="entry name" value="NAD(P)-bd_dom_sf"/>
</dbReference>
<dbReference type="InterPro" id="IPR038251">
    <property type="entry name" value="PdxB_dimer_sf"/>
</dbReference>
<dbReference type="PANTHER" id="PTHR43761:SF1">
    <property type="entry name" value="D-ISOMER SPECIFIC 2-HYDROXYACID DEHYDROGENASE CATALYTIC DOMAIN-CONTAINING PROTEIN-RELATED"/>
    <property type="match status" value="1"/>
</dbReference>
<dbReference type="PANTHER" id="PTHR43761">
    <property type="entry name" value="D-ISOMER SPECIFIC 2-HYDROXYACID DEHYDROGENASE FAMILY PROTEIN (AFU_ORTHOLOGUE AFUA_1G13630)"/>
    <property type="match status" value="1"/>
</dbReference>
<dbReference type="Pfam" id="PF00389">
    <property type="entry name" value="2-Hacid_dh"/>
    <property type="match status" value="1"/>
</dbReference>
<dbReference type="Pfam" id="PF02826">
    <property type="entry name" value="2-Hacid_dh_C"/>
    <property type="match status" value="1"/>
</dbReference>
<dbReference type="Pfam" id="PF11890">
    <property type="entry name" value="DUF3410"/>
    <property type="match status" value="1"/>
</dbReference>
<dbReference type="SUPFAM" id="SSF52283">
    <property type="entry name" value="Formate/glycerate dehydrogenase catalytic domain-like"/>
    <property type="match status" value="1"/>
</dbReference>
<dbReference type="SUPFAM" id="SSF51735">
    <property type="entry name" value="NAD(P)-binding Rossmann-fold domains"/>
    <property type="match status" value="1"/>
</dbReference>
<accession>Q12P58</accession>
<reference key="1">
    <citation type="submission" date="2006-03" db="EMBL/GenBank/DDBJ databases">
        <title>Complete sequence of Shewanella denitrificans OS217.</title>
        <authorList>
            <consortium name="US DOE Joint Genome Institute"/>
            <person name="Copeland A."/>
            <person name="Lucas S."/>
            <person name="Lapidus A."/>
            <person name="Barry K."/>
            <person name="Detter J.C."/>
            <person name="Glavina del Rio T."/>
            <person name="Hammon N."/>
            <person name="Israni S."/>
            <person name="Dalin E."/>
            <person name="Tice H."/>
            <person name="Pitluck S."/>
            <person name="Brettin T."/>
            <person name="Bruce D."/>
            <person name="Han C."/>
            <person name="Tapia R."/>
            <person name="Gilna P."/>
            <person name="Kiss H."/>
            <person name="Schmutz J."/>
            <person name="Larimer F."/>
            <person name="Land M."/>
            <person name="Hauser L."/>
            <person name="Kyrpides N."/>
            <person name="Lykidis A."/>
            <person name="Richardson P."/>
        </authorList>
    </citation>
    <scope>NUCLEOTIDE SEQUENCE [LARGE SCALE GENOMIC DNA]</scope>
    <source>
        <strain>OS217 / ATCC BAA-1090 / DSM 15013</strain>
    </source>
</reference>
<name>PDXB_SHEDO</name>
<feature type="chain" id="PRO_0000297466" description="Erythronate-4-phosphate dehydrogenase">
    <location>
        <begin position="1"/>
        <end position="378"/>
    </location>
</feature>
<feature type="active site" evidence="1">
    <location>
        <position position="209"/>
    </location>
</feature>
<feature type="active site" evidence="1">
    <location>
        <position position="238"/>
    </location>
</feature>
<feature type="active site" description="Proton donor" evidence="1">
    <location>
        <position position="255"/>
    </location>
</feature>
<feature type="binding site" evidence="1">
    <location>
        <position position="45"/>
    </location>
    <ligand>
        <name>substrate</name>
    </ligand>
</feature>
<feature type="binding site" evidence="1">
    <location>
        <position position="67"/>
    </location>
    <ligand>
        <name>substrate</name>
    </ligand>
</feature>
<feature type="binding site" evidence="1">
    <location>
        <position position="147"/>
    </location>
    <ligand>
        <name>NAD(+)</name>
        <dbReference type="ChEBI" id="CHEBI:57540"/>
    </ligand>
</feature>
<feature type="binding site" evidence="1">
    <location>
        <position position="233"/>
    </location>
    <ligand>
        <name>NAD(+)</name>
        <dbReference type="ChEBI" id="CHEBI:57540"/>
    </ligand>
</feature>
<feature type="binding site" evidence="1">
    <location>
        <position position="258"/>
    </location>
    <ligand>
        <name>NAD(+)</name>
        <dbReference type="ChEBI" id="CHEBI:57540"/>
    </ligand>
</feature>
<feature type="binding site" evidence="1">
    <location>
        <position position="259"/>
    </location>
    <ligand>
        <name>substrate</name>
    </ligand>
</feature>
<organism>
    <name type="scientific">Shewanella denitrificans (strain OS217 / ATCC BAA-1090 / DSM 15013)</name>
    <dbReference type="NCBI Taxonomy" id="318161"/>
    <lineage>
        <taxon>Bacteria</taxon>
        <taxon>Pseudomonadati</taxon>
        <taxon>Pseudomonadota</taxon>
        <taxon>Gammaproteobacteria</taxon>
        <taxon>Alteromonadales</taxon>
        <taxon>Shewanellaceae</taxon>
        <taxon>Shewanella</taxon>
    </lineage>
</organism>
<evidence type="ECO:0000255" key="1">
    <source>
        <dbReference type="HAMAP-Rule" id="MF_01825"/>
    </source>
</evidence>
<keyword id="KW-0963">Cytoplasm</keyword>
<keyword id="KW-0520">NAD</keyword>
<keyword id="KW-0560">Oxidoreductase</keyword>
<keyword id="KW-0664">Pyridoxine biosynthesis</keyword>
<keyword id="KW-1185">Reference proteome</keyword>
<comment type="function">
    <text evidence="1">Catalyzes the oxidation of erythronate-4-phosphate to 3-hydroxy-2-oxo-4-phosphonooxybutanoate.</text>
</comment>
<comment type="catalytic activity">
    <reaction evidence="1">
        <text>4-phospho-D-erythronate + NAD(+) = (R)-3-hydroxy-2-oxo-4-phosphooxybutanoate + NADH + H(+)</text>
        <dbReference type="Rhea" id="RHEA:18829"/>
        <dbReference type="ChEBI" id="CHEBI:15378"/>
        <dbReference type="ChEBI" id="CHEBI:57540"/>
        <dbReference type="ChEBI" id="CHEBI:57945"/>
        <dbReference type="ChEBI" id="CHEBI:58538"/>
        <dbReference type="ChEBI" id="CHEBI:58766"/>
        <dbReference type="EC" id="1.1.1.290"/>
    </reaction>
</comment>
<comment type="pathway">
    <text evidence="1">Cofactor biosynthesis; pyridoxine 5'-phosphate biosynthesis; pyridoxine 5'-phosphate from D-erythrose 4-phosphate: step 2/5.</text>
</comment>
<comment type="subunit">
    <text evidence="1">Homodimer.</text>
</comment>
<comment type="subcellular location">
    <subcellularLocation>
        <location evidence="1">Cytoplasm</location>
    </subcellularLocation>
</comment>
<comment type="similarity">
    <text evidence="1">Belongs to the D-isomer specific 2-hydroxyacid dehydrogenase family. PdxB subfamily.</text>
</comment>
<sequence>MKIVADENMPFVEALFGGLGDVVRVNGRSLSAKDLKDADVLLVRSVTKVNQTLLQDCQSLKFVGSATIGTDHIDQAYLKHRGIPFANAPGCNATGVGEYAFIAALELAQREQVNLKDKVIGIVGAGNTGMAAAKCFAAFGNKVLVCDPFKTQDMLYFPLVGLDELIQQADIISLHVPLSDNGPYKTWYLFDEARLESLTPNTWLFNCCRGEVIDNRALIEFKRRRDDIKLVLDVWQGEPHPMAELVPLTEFATPHIAGYSLEGKARGTFMLYQALATSLNLPVKASLQSLLPSHFVNQLGLASQTELTQGQLLSLARLVYDLRDDDKNFRQAFDKTNGFDQLRKNHTHRREFSALTLASSGGCEVNWLTKLGFSGVGR</sequence>